<keyword id="KW-0025">Alternative splicing</keyword>
<keyword id="KW-0106">Calcium</keyword>
<keyword id="KW-1003">Cell membrane</keyword>
<keyword id="KW-1015">Disulfide bond</keyword>
<keyword id="KW-0325">Glycoprotein</keyword>
<keyword id="KW-0406">Ion transport</keyword>
<keyword id="KW-0408">Iron</keyword>
<keyword id="KW-0410">Iron transport</keyword>
<keyword id="KW-0472">Membrane</keyword>
<keyword id="KW-0479">Metal-binding</keyword>
<keyword id="KW-0560">Oxidoreductase</keyword>
<keyword id="KW-0597">Phosphoprotein</keyword>
<keyword id="KW-1267">Proteomics identification</keyword>
<keyword id="KW-1185">Reference proteome</keyword>
<keyword id="KW-0677">Repeat</keyword>
<keyword id="KW-0732">Signal</keyword>
<keyword id="KW-0915">Sodium</keyword>
<keyword id="KW-0812">Transmembrane</keyword>
<keyword id="KW-1133">Transmembrane helix</keyword>
<keyword id="KW-0813">Transport</keyword>
<organism>
    <name type="scientific">Homo sapiens</name>
    <name type="common">Human</name>
    <dbReference type="NCBI Taxonomy" id="9606"/>
    <lineage>
        <taxon>Eukaryota</taxon>
        <taxon>Metazoa</taxon>
        <taxon>Chordata</taxon>
        <taxon>Craniata</taxon>
        <taxon>Vertebrata</taxon>
        <taxon>Euteleostomi</taxon>
        <taxon>Mammalia</taxon>
        <taxon>Eutheria</taxon>
        <taxon>Euarchontoglires</taxon>
        <taxon>Primates</taxon>
        <taxon>Haplorrhini</taxon>
        <taxon>Catarrhini</taxon>
        <taxon>Hominidae</taxon>
        <taxon>Homo</taxon>
    </lineage>
</organism>
<sequence>MESGHLLWALLFMQSLWPQLTDGATRVYYLGIRDVQWNYAPKGRNVITNQPLDSDIVASSFLKSDKNRIGGTYKKTIYKEYKDDSYTDEVAQPAWLGFLGPVLQAEVGDVILIHLKNFATRPYTIHPHGVFYEKDSEGSLYPDGSSGPLKADDSVPPGGSHIYNWTIPEGHAPTDADPACLTWIYHSHVDAPRDIATGLIGPLITCKRGALDGNSPPQRQDVDHDFFLLFSVVDENLSWHLNENIATYCSDPASVDKEDETFQESNRMHAINGFVFGNLPELNMCAQKRVAWHLFGMGNEIDVHTAFFHGQMLTTRGHHTDVANIFPATFVTAEMVPWEPGTWLISCQVNSHFRDGMQALYKVKSCSMAPPVDLLTGKVRQYFIEAHEIQWDYGPMGHDGSTGKNLREPGSISDKFFQKSSSRIGGTYWKVRYEAFQDETFQEKMHLEEDRHLGILGPVIRAEVGDTIQVVFYNRASQPFSMQPHGVFYEKDYEGTVYNDGSSYPGLVAKPFEKVTYRWTVPPHAGPTAQDPACLTWMYFSAADPIRDTNSGLVGPLLVCRAGALGADGKQKGVDKEFFLLFTVLDENKSWYSNANQAAAMLDFRLLSEDIEGFQDSNRMHAINGFLFSNLPRLDMCKGDTVAWHLLGLGTETDVHGVMFQGNTVQLQGMRKGAAMLFPHTFVMAIMQPDNLGTFEIYCQAGSHREAGMRAIYNVSQCPGHQATPRQRYQAARIYYIMAEEVEWDYCPDRSWEREWHNQSEKDSYGYIFLSNKDGLLGSRYKKAVFREYTDGTFRIPRPRTGPEEHLGILGPLIKGEVGDILTVVFKNNASRPYSVHAHGVLESTTVWPLAAEPGEVVTYQWNIPERSGPGPNDSACVSWIYYSAVDPIKDMYSGLVGPLAICQKGILEPHGGRSDMDREFALLFLIFDENKSWYLEENVATHGSQDPGSINLQDETFLESNKMHAINGKLYANLRGLTMYQGERVAWYMLAMGQDVDLHTIHFHAESFLYRNGENYRADVVDLFPGTFEVVEMVASNPGTWLMHCHVTDHVHAGMETLFTVFSRTEHLSPLTVITKETEKAVPPRDIEEGNVKMLGMQIPIKNVEMLASVLVAISVTLLLVVLALGGVVWYQHRQRKLRRNRRSILDDSFKLLSFKQ</sequence>
<name>HEPH_HUMAN</name>
<comment type="function">
    <text evidence="2 7 8">Plasma membrane ferroxidase that mediates the extracellular conversion of ferrous/Fe(2+) iron into its ferric/Fe(3+) form. Couples ferroportin which specifically exports ferrous/Fe(2+) iron from cells to transferrin that only binds and shuttles extracellular ferric/Fe(3+) iron throughout the body (PubMed:22961397, PubMed:37277838). By helping iron transfer from cells to blood mainly contributes to dietary iron absorption by the intestinal epithelium and more generally regulates iron levels in the body (By similarity).</text>
</comment>
<comment type="catalytic activity">
    <reaction evidence="7">
        <text>4 Fe(2+) + O2 + 4 H(+) = 4 Fe(3+) + 2 H2O</text>
        <dbReference type="Rhea" id="RHEA:11148"/>
        <dbReference type="ChEBI" id="CHEBI:15377"/>
        <dbReference type="ChEBI" id="CHEBI:15378"/>
        <dbReference type="ChEBI" id="CHEBI:15379"/>
        <dbReference type="ChEBI" id="CHEBI:29033"/>
        <dbReference type="ChEBI" id="CHEBI:29034"/>
        <dbReference type="EC" id="1.16.3.1"/>
    </reaction>
    <physiologicalReaction direction="left-to-right" evidence="13">
        <dbReference type="Rhea" id="RHEA:11149"/>
    </physiologicalReaction>
</comment>
<comment type="cofactor">
    <cofactor evidence="1">
        <name>Cu cation</name>
        <dbReference type="ChEBI" id="CHEBI:23378"/>
    </cofactor>
    <text evidence="1">Binds 6 Cu cations per monomer.</text>
</comment>
<comment type="biophysicochemical properties">
    <kinetics>
        <KM evidence="7">4 uM for Fe(2+) (at pH 5.0)</KM>
        <text evidence="7">kcat is 18 min(-1) for the oxidation of Fe(2+) (at pH 5.0).</text>
    </kinetics>
</comment>
<comment type="subunit">
    <text evidence="8">Part of a complex composed of SLC40A1/ferroportin, TF/transferrin and HEPH/hephaestin that transfers iron from cells to transferrin.</text>
</comment>
<comment type="interaction">
    <interactant intactId="EBI-22734368">
        <id>Q9BQS7-3</id>
    </interactant>
    <interactant intactId="EBI-374781">
        <id>O76003</id>
        <label>GLRX3</label>
    </interactant>
    <organismsDiffer>false</organismsDiffer>
    <experiments>3</experiments>
</comment>
<comment type="subcellular location">
    <subcellularLocation>
        <location evidence="5 6">Basolateral cell membrane</location>
        <topology evidence="3">Single-pass type I membrane protein</topology>
    </subcellularLocation>
</comment>
<comment type="alternative products">
    <event type="alternative splicing"/>
    <isoform>
        <id>Q9BQS7-1</id>
        <name>1</name>
        <sequence type="displayed"/>
    </isoform>
    <isoform>
        <id>Q9BQS7-2</id>
        <name>2</name>
        <sequence type="described" ref="VSP_011627"/>
    </isoform>
    <isoform>
        <id>Q9BQS7-3</id>
        <name>3</name>
        <sequence type="described" ref="VSP_047331"/>
    </isoform>
    <isoform>
        <id>Q9BQS7-4</id>
        <name>4</name>
        <sequence type="described" ref="VSP_047332"/>
    </isoform>
</comment>
<comment type="tissue specificity">
    <text evidence="4 5">Expressed by intestinal absorptive cells (at protein level) (PubMed:17486601). Also detected in breast, colon, bone trabecular cells and fibroblasts (PubMed:11932491).</text>
</comment>
<comment type="similarity">
    <text evidence="12">Belongs to the multicopper oxidase family.</text>
</comment>
<comment type="sequence caution" evidence="12">
    <conflict type="erroneous initiation">
        <sequence resource="EMBL-CDS" id="AAQ89349"/>
    </conflict>
    <text>Extended N-terminus.</text>
</comment>
<comment type="sequence caution" evidence="12">
    <conflict type="erroneous initiation">
        <sequence resource="EMBL-CDS" id="EAX05385"/>
    </conflict>
    <text>Extended N-terminus.</text>
</comment>
<comment type="sequence caution" evidence="12">
    <conflict type="erroneous initiation">
        <sequence resource="EMBL-CDS" id="EAX05388"/>
    </conflict>
    <text>Extended N-terminus.</text>
</comment>
<comment type="online information" name="Wikipedia">
    <link uri="https://en.wikipedia.org/wiki/Hephaestin"/>
    <text>Hephaestin entry</text>
</comment>
<feature type="signal peptide" evidence="3">
    <location>
        <begin position="1"/>
        <end position="23"/>
    </location>
</feature>
<feature type="chain" id="PRO_0000002915" description="Hephaestin">
    <location>
        <begin position="24"/>
        <end position="1158"/>
    </location>
</feature>
<feature type="topological domain" description="Extracellular" evidence="3">
    <location>
        <begin position="24"/>
        <end position="1110"/>
    </location>
</feature>
<feature type="transmembrane region" description="Helical" evidence="3">
    <location>
        <begin position="1111"/>
        <end position="1131"/>
    </location>
</feature>
<feature type="topological domain" description="Cytoplasmic" evidence="3">
    <location>
        <begin position="1132"/>
        <end position="1158"/>
    </location>
</feature>
<feature type="domain" description="Plastocyanin-like 1" evidence="1">
    <location>
        <begin position="24"/>
        <end position="206"/>
    </location>
</feature>
<feature type="domain" description="Plastocyanin-like 2" evidence="1">
    <location>
        <begin position="218"/>
        <end position="366"/>
    </location>
</feature>
<feature type="domain" description="Plastocyanin-like 3" evidence="1">
    <location>
        <begin position="370"/>
        <end position="560"/>
    </location>
</feature>
<feature type="domain" description="Plastocyanin-like 4" evidence="1">
    <location>
        <begin position="570"/>
        <end position="718"/>
    </location>
</feature>
<feature type="domain" description="Plastocyanin-like 5" evidence="1">
    <location>
        <begin position="731"/>
        <end position="903"/>
    </location>
</feature>
<feature type="domain" description="Plastocyanin-like 6" evidence="1">
    <location>
        <begin position="911"/>
        <end position="1067"/>
    </location>
</feature>
<feature type="binding site" evidence="1">
    <location>
        <position position="70"/>
    </location>
    <ligand>
        <name>Na(+)</name>
        <dbReference type="ChEBI" id="CHEBI:29101"/>
        <label>1</label>
    </ligand>
</feature>
<feature type="binding site" evidence="1">
    <location>
        <position position="73"/>
    </location>
    <ligand>
        <name>Na(+)</name>
        <dbReference type="ChEBI" id="CHEBI:29101"/>
        <label>1</label>
    </ligand>
</feature>
<feature type="binding site" description="type 2 copper site" evidence="1">
    <location>
        <position position="126"/>
    </location>
    <ligand>
        <name>Cu(2+)</name>
        <dbReference type="ChEBI" id="CHEBI:29036"/>
        <label>1</label>
    </ligand>
</feature>
<feature type="binding site" evidence="1">
    <location>
        <position position="126"/>
    </location>
    <ligand>
        <name>O2</name>
        <dbReference type="ChEBI" id="CHEBI:15379"/>
    </ligand>
</feature>
<feature type="binding site" description="type 3 copper site" evidence="1">
    <location>
        <position position="128"/>
    </location>
    <ligand>
        <name>Cu(2+)</name>
        <dbReference type="ChEBI" id="CHEBI:29036"/>
        <label>2</label>
    </ligand>
</feature>
<feature type="binding site" evidence="1">
    <location>
        <position position="134"/>
    </location>
    <ligand>
        <name>Ca(2+)</name>
        <dbReference type="ChEBI" id="CHEBI:29108"/>
    </ligand>
</feature>
<feature type="binding site" evidence="1">
    <location>
        <position position="152"/>
    </location>
    <ligand>
        <name>Ca(2+)</name>
        <dbReference type="ChEBI" id="CHEBI:29108"/>
    </ligand>
</feature>
<feature type="binding site" evidence="1">
    <location>
        <position position="153"/>
    </location>
    <ligand>
        <name>Ca(2+)</name>
        <dbReference type="ChEBI" id="CHEBI:29108"/>
    </ligand>
</feature>
<feature type="binding site" description="type 3 copper site" evidence="1">
    <location>
        <position position="186"/>
    </location>
    <ligand>
        <name>Cu(2+)</name>
        <dbReference type="ChEBI" id="CHEBI:29036"/>
        <label>2</label>
    </ligand>
</feature>
<feature type="binding site" evidence="1">
    <location>
        <position position="186"/>
    </location>
    <ligand>
        <name>O2</name>
        <dbReference type="ChEBI" id="CHEBI:15379"/>
    </ligand>
</feature>
<feature type="binding site" description="type 3 copper site" evidence="1">
    <location>
        <position position="188"/>
    </location>
    <ligand>
        <name>Cu(2+)</name>
        <dbReference type="ChEBI" id="CHEBI:29036"/>
        <label>3</label>
    </ligand>
</feature>
<feature type="binding site" evidence="1">
    <location>
        <position position="265"/>
    </location>
    <ligand>
        <name>Na(+)</name>
        <dbReference type="ChEBI" id="CHEBI:29101"/>
        <label>1</label>
    </ligand>
</feature>
<feature type="binding site" description="type 1 copper site" evidence="1">
    <location>
        <position position="304"/>
    </location>
    <ligand>
        <name>Cu(2+)</name>
        <dbReference type="ChEBI" id="CHEBI:29036"/>
        <label>4</label>
    </ligand>
</feature>
<feature type="binding site" description="type 1 copper site" evidence="1">
    <location>
        <position position="347"/>
    </location>
    <ligand>
        <name>Cu(2+)</name>
        <dbReference type="ChEBI" id="CHEBI:29036"/>
        <label>4</label>
    </ligand>
</feature>
<feature type="binding site" description="type 1 copper site" evidence="1">
    <location>
        <position position="352"/>
    </location>
    <ligand>
        <name>Cu(2+)</name>
        <dbReference type="ChEBI" id="CHEBI:29036"/>
        <label>4</label>
    </ligand>
</feature>
<feature type="binding site" evidence="1">
    <location>
        <position position="416"/>
    </location>
    <ligand>
        <name>Na(+)</name>
        <dbReference type="ChEBI" id="CHEBI:29101"/>
        <label>2</label>
    </ligand>
</feature>
<feature type="binding site" evidence="1">
    <location>
        <position position="425"/>
    </location>
    <ligand>
        <name>Na(+)</name>
        <dbReference type="ChEBI" id="CHEBI:29101"/>
        <label>2</label>
    </ligand>
</feature>
<feature type="binding site" evidence="1">
    <location>
        <position position="428"/>
    </location>
    <ligand>
        <name>Na(+)</name>
        <dbReference type="ChEBI" id="CHEBI:29101"/>
        <label>2</label>
    </ligand>
</feature>
<feature type="binding site" evidence="1">
    <location>
        <position position="617"/>
    </location>
    <ligand>
        <name>Na(+)</name>
        <dbReference type="ChEBI" id="CHEBI:29101"/>
        <label>2</label>
    </ligand>
</feature>
<feature type="binding site" description="type 1 copper site" evidence="1">
    <location>
        <position position="656"/>
    </location>
    <ligand>
        <name>Cu(2+)</name>
        <dbReference type="ChEBI" id="CHEBI:29036"/>
        <label>5</label>
    </ligand>
</feature>
<feature type="binding site" description="type 1 copper site" evidence="1">
    <location>
        <position position="699"/>
    </location>
    <ligand>
        <name>Cu(2+)</name>
        <dbReference type="ChEBI" id="CHEBI:29036"/>
        <label>5</label>
    </ligand>
</feature>
<feature type="binding site" description="type 1 copper site" evidence="1">
    <location>
        <position position="704"/>
    </location>
    <ligand>
        <name>Cu(2+)</name>
        <dbReference type="ChEBI" id="CHEBI:29036"/>
        <label>5</label>
    </ligand>
</feature>
<feature type="binding site" description="type 1 copper site" evidence="1">
    <location>
        <position position="709"/>
    </location>
    <ligand>
        <name>Cu(2+)</name>
        <dbReference type="ChEBI" id="CHEBI:29036"/>
        <label>5</label>
    </ligand>
</feature>
<feature type="binding site" evidence="1">
    <location>
        <position position="769"/>
    </location>
    <ligand>
        <name>Na(+)</name>
        <dbReference type="ChEBI" id="CHEBI:29101"/>
        <label>3</label>
    </ligand>
</feature>
<feature type="binding site" evidence="1">
    <location>
        <position position="778"/>
    </location>
    <ligand>
        <name>Na(+)</name>
        <dbReference type="ChEBI" id="CHEBI:29101"/>
        <label>3</label>
    </ligand>
</feature>
<feature type="binding site" description="type 1 copper site" evidence="1">
    <location>
        <position position="1000"/>
    </location>
    <ligand>
        <name>Cu(2+)</name>
        <dbReference type="ChEBI" id="CHEBI:29036"/>
        <label>6</label>
    </ligand>
</feature>
<feature type="binding site" description="type 2 copper site" evidence="1">
    <location>
        <position position="1003"/>
    </location>
    <ligand>
        <name>Cu(2+)</name>
        <dbReference type="ChEBI" id="CHEBI:29036"/>
        <label>1</label>
    </ligand>
</feature>
<feature type="binding site" evidence="1">
    <location>
        <position position="1003"/>
    </location>
    <ligand>
        <name>O2</name>
        <dbReference type="ChEBI" id="CHEBI:15379"/>
    </ligand>
</feature>
<feature type="binding site" description="type 3 copper site" evidence="1">
    <location>
        <position position="1005"/>
    </location>
    <ligand>
        <name>Cu(2+)</name>
        <dbReference type="ChEBI" id="CHEBI:29036"/>
        <label>3</label>
    </ligand>
</feature>
<feature type="binding site" evidence="1">
    <location>
        <position position="1005"/>
    </location>
    <ligand>
        <name>O2</name>
        <dbReference type="ChEBI" id="CHEBI:15379"/>
    </ligand>
</feature>
<feature type="binding site" description="type 3 copper site" evidence="1">
    <location>
        <position position="1045"/>
    </location>
    <ligand>
        <name>Cu(2+)</name>
        <dbReference type="ChEBI" id="CHEBI:29036"/>
        <label>3</label>
    </ligand>
</feature>
<feature type="binding site" description="type 1 copper site" evidence="1">
    <location>
        <position position="1046"/>
    </location>
    <ligand>
        <name>Cu(2+)</name>
        <dbReference type="ChEBI" id="CHEBI:29036"/>
        <label>6</label>
    </ligand>
</feature>
<feature type="binding site" description="type 3 copper site" evidence="1">
    <location>
        <position position="1047"/>
    </location>
    <ligand>
        <name>Cu(2+)</name>
        <dbReference type="ChEBI" id="CHEBI:29036"/>
        <label>2</label>
    </ligand>
</feature>
<feature type="binding site" evidence="1">
    <location>
        <position position="1047"/>
    </location>
    <ligand>
        <name>O2</name>
        <dbReference type="ChEBI" id="CHEBI:15379"/>
    </ligand>
</feature>
<feature type="binding site" description="type 1 copper site" evidence="1">
    <location>
        <position position="1051"/>
    </location>
    <ligand>
        <name>Cu(2+)</name>
        <dbReference type="ChEBI" id="CHEBI:29036"/>
        <label>6</label>
    </ligand>
</feature>
<feature type="binding site" description="type 1 copper site" evidence="1">
    <location>
        <position position="1056"/>
    </location>
    <ligand>
        <name>Cu(2+)</name>
        <dbReference type="ChEBI" id="CHEBI:29036"/>
        <label>6</label>
    </ligand>
</feature>
<feature type="modified residue" description="Phosphoserine" evidence="17">
    <location>
        <position position="1145"/>
    </location>
</feature>
<feature type="modified residue" description="Phosphoserine" evidence="17">
    <location>
        <position position="1150"/>
    </location>
</feature>
<feature type="modified residue" description="Phosphoserine" evidence="2">
    <location>
        <position position="1155"/>
    </location>
</feature>
<feature type="glycosylation site" description="N-linked (GlcNAc...) asparagine" evidence="3">
    <location>
        <position position="164"/>
    </location>
</feature>
<feature type="glycosylation site" description="N-linked (GlcNAc...) asparagine" evidence="3">
    <location>
        <position position="236"/>
    </location>
</feature>
<feature type="glycosylation site" description="N-linked (GlcNAc...) asparagine" evidence="3">
    <location>
        <position position="588"/>
    </location>
</feature>
<feature type="glycosylation site" description="N-linked (GlcNAc...) asparagine" evidence="3">
    <location>
        <position position="714"/>
    </location>
</feature>
<feature type="glycosylation site" description="N-linked (GlcNAc...) asparagine" evidence="3">
    <location>
        <position position="758"/>
    </location>
</feature>
<feature type="glycosylation site" description="N-linked (GlcNAc...) asparagine" evidence="3">
    <location>
        <position position="829"/>
    </location>
</feature>
<feature type="glycosylation site" description="N-linked (GlcNAc...) asparagine" evidence="3">
    <location>
        <position position="873"/>
    </location>
</feature>
<feature type="glycosylation site" description="N-linked (GlcNAc...) asparagine" evidence="3">
    <location>
        <position position="931"/>
    </location>
</feature>
<feature type="disulfide bond" evidence="3">
    <location>
        <begin position="180"/>
        <end position="206"/>
    </location>
</feature>
<feature type="disulfide bond" evidence="3">
    <location>
        <begin position="285"/>
        <end position="366"/>
    </location>
</feature>
<feature type="disulfide bond" evidence="3">
    <location>
        <begin position="534"/>
        <end position="560"/>
    </location>
</feature>
<feature type="disulfide bond" evidence="3">
    <location>
        <begin position="637"/>
        <end position="718"/>
    </location>
</feature>
<feature type="disulfide bond" evidence="3">
    <location>
        <begin position="877"/>
        <end position="903"/>
    </location>
</feature>
<feature type="splice variant" id="VSP_047332" description="In isoform 4." evidence="12">
    <location>
        <begin position="1"/>
        <end position="267"/>
    </location>
</feature>
<feature type="splice variant" id="VSP_047331" description="In isoform 3." evidence="12">
    <original>M</original>
    <variation>MTQTLPYHLSLLNVLFPGPCSRHFKFRRGKCAQPAWRKVSAPSQDLLITKVMWAM</variation>
    <location>
        <position position="1"/>
    </location>
</feature>
<feature type="splice variant" id="VSP_011627" description="In isoform 2." evidence="10">
    <location>
        <position position="1082"/>
    </location>
</feature>
<feature type="sequence variant" id="VAR_024379" description="In dbSNP:rs17216603.">
    <original>A</original>
    <variation>T</variation>
    <location>
        <position position="595"/>
    </location>
</feature>
<feature type="mutagenesis site" description="Decreased affinity for Fe(2+) and decreased ferroxidase activity; when associated with A-269, A-616 and A-621. Loss of affinity for Fe(2+) and loss of ferroxidase activity; when associated with A-269, A-960 and A-965." evidence="7">
    <original>E</original>
    <variation>A</variation>
    <location>
        <position position="264"/>
    </location>
</feature>
<feature type="mutagenesis site" description="Decreased affinity for Fe(2+) and decreased ferroxidase activity; when associated with A-264, A-616 and A-621. Loss of affinity for Fe(2+) and loss of ferroxidase activity; when associated with A-264, A-960 and A-965." evidence="7">
    <original>H</original>
    <variation>A</variation>
    <location>
        <position position="269"/>
    </location>
</feature>
<feature type="mutagenesis site" description="Decreased affinity for Fe(2+) and decreased ferroxidase activity; when associated with A-264, A-269 and A-621." evidence="7">
    <original>D</original>
    <variation>A</variation>
    <location>
        <position position="616"/>
    </location>
</feature>
<feature type="mutagenesis site" description="Decreased affinity for Fe(2+) and decreased ferroxidase activity; when associated with A-264, A-269 and A-616." evidence="7">
    <original>H</original>
    <variation>A</variation>
    <location>
        <position position="621"/>
    </location>
</feature>
<feature type="mutagenesis site" description="Loss of affinity for Fe(2+) and loss of ferroxidase activity; when associated with A-264, A-269 and A-965." evidence="7">
    <original>E</original>
    <variation>A</variation>
    <location>
        <position position="960"/>
    </location>
</feature>
<feature type="mutagenesis site" description="Loss of affinity for Fe(2+) and loss of ferroxidase activity; when associated with A-264, A-269 and A-960." evidence="7">
    <original>H</original>
    <variation>A</variation>
    <location>
        <position position="965"/>
    </location>
</feature>
<feature type="sequence conflict" description="In Ref. 7; BAA31673." evidence="12" ref="7">
    <original>DI</original>
    <variation>QR</variation>
    <location>
        <begin position="55"/>
        <end position="56"/>
    </location>
</feature>
<feature type="sequence conflict" description="In Ref. 1; CAC35365." evidence="12" ref="1">
    <original>V</original>
    <variation>T</variation>
    <location>
        <position position="222"/>
    </location>
</feature>
<dbReference type="EC" id="1.16.3.1" evidence="7"/>
<dbReference type="EMBL" id="AJ296162">
    <property type="protein sequence ID" value="CAC35365.2"/>
    <property type="molecule type" value="mRNA"/>
</dbReference>
<dbReference type="EMBL" id="AF148860">
    <property type="protein sequence ID" value="AAK08131.1"/>
    <property type="molecule type" value="mRNA"/>
</dbReference>
<dbReference type="EMBL" id="AY358990">
    <property type="protein sequence ID" value="AAQ89349.1"/>
    <property type="status" value="ALT_INIT"/>
    <property type="molecule type" value="mRNA"/>
</dbReference>
<dbReference type="EMBL" id="AL030998">
    <property type="status" value="NOT_ANNOTATED_CDS"/>
    <property type="molecule type" value="Genomic_DNA"/>
</dbReference>
<dbReference type="EMBL" id="AL157698">
    <property type="status" value="NOT_ANNOTATED_CDS"/>
    <property type="molecule type" value="Genomic_DNA"/>
</dbReference>
<dbReference type="EMBL" id="CH471132">
    <property type="protein sequence ID" value="EAX05384.1"/>
    <property type="molecule type" value="Genomic_DNA"/>
</dbReference>
<dbReference type="EMBL" id="CH471132">
    <property type="protein sequence ID" value="EAX05385.1"/>
    <property type="status" value="ALT_INIT"/>
    <property type="molecule type" value="Genomic_DNA"/>
</dbReference>
<dbReference type="EMBL" id="CH471132">
    <property type="protein sequence ID" value="EAX05386.1"/>
    <property type="molecule type" value="Genomic_DNA"/>
</dbReference>
<dbReference type="EMBL" id="CH471132">
    <property type="protein sequence ID" value="EAX05388.1"/>
    <property type="status" value="ALT_INIT"/>
    <property type="molecule type" value="Genomic_DNA"/>
</dbReference>
<dbReference type="EMBL" id="BC011561">
    <property type="protein sequence ID" value="AAH11561.1"/>
    <property type="molecule type" value="mRNA"/>
</dbReference>
<dbReference type="EMBL" id="AB014598">
    <property type="protein sequence ID" value="BAA31673.2"/>
    <property type="molecule type" value="mRNA"/>
</dbReference>
<dbReference type="CCDS" id="CCDS14384.4">
    <molecule id="Q9BQS7-1"/>
</dbReference>
<dbReference type="CCDS" id="CCDS14385.1">
    <molecule id="Q9BQS7-4"/>
</dbReference>
<dbReference type="CCDS" id="CCDS48133.2">
    <molecule id="Q9BQS7-2"/>
</dbReference>
<dbReference type="RefSeq" id="NP_001124332.2">
    <molecule id="Q9BQS7-2"/>
    <property type="nucleotide sequence ID" value="NM_001130860.6"/>
</dbReference>
<dbReference type="RefSeq" id="NP_001269070.1">
    <property type="nucleotide sequence ID" value="NM_001282141.1"/>
</dbReference>
<dbReference type="RefSeq" id="NP_001354161.2">
    <molecule id="Q9BQS7-1"/>
    <property type="nucleotide sequence ID" value="NM_001367232.3"/>
</dbReference>
<dbReference type="RefSeq" id="NP_001354162.2">
    <molecule id="Q9BQS7-1"/>
    <property type="nucleotide sequence ID" value="NM_001367233.3"/>
</dbReference>
<dbReference type="RefSeq" id="NP_001354163.2">
    <molecule id="Q9BQS7-1"/>
    <property type="nucleotide sequence ID" value="NM_001367234.3"/>
</dbReference>
<dbReference type="RefSeq" id="NP_001354171.1">
    <molecule id="Q9BQS7-4"/>
    <property type="nucleotide sequence ID" value="NM_001367242.2"/>
</dbReference>
<dbReference type="RefSeq" id="NP_055614.1">
    <molecule id="Q9BQS7-4"/>
    <property type="nucleotide sequence ID" value="NM_014799.4"/>
</dbReference>
<dbReference type="RefSeq" id="NP_620074.4">
    <molecule id="Q9BQS7-1"/>
    <property type="nucleotide sequence ID" value="NM_138737.6"/>
</dbReference>
<dbReference type="RefSeq" id="XP_006724785.1">
    <property type="nucleotide sequence ID" value="XM_006724722.1"/>
</dbReference>
<dbReference type="SMR" id="Q9BQS7"/>
<dbReference type="BioGRID" id="115179">
    <property type="interactions" value="5"/>
</dbReference>
<dbReference type="CORUM" id="Q9BQS7"/>
<dbReference type="FunCoup" id="Q9BQS7">
    <property type="interactions" value="358"/>
</dbReference>
<dbReference type="IntAct" id="Q9BQS7">
    <property type="interactions" value="1"/>
</dbReference>
<dbReference type="STRING" id="9606.ENSP00000430620"/>
<dbReference type="DrugBank" id="DB09130">
    <property type="generic name" value="Copper"/>
</dbReference>
<dbReference type="DrugBank" id="DB13257">
    <property type="generic name" value="Ferrous sulfate anhydrous"/>
</dbReference>
<dbReference type="TCDB" id="8.A.105.1.1">
    <property type="family name" value="the multi-copper-containing ferroxidase (mcfo) family"/>
</dbReference>
<dbReference type="GlyCosmos" id="Q9BQS7">
    <property type="glycosylation" value="8 sites, No reported glycans"/>
</dbReference>
<dbReference type="GlyGen" id="Q9BQS7">
    <property type="glycosylation" value="13 sites, 2 N-linked glycans (1 site), 1 O-linked glycan (5 sites)"/>
</dbReference>
<dbReference type="iPTMnet" id="Q9BQS7"/>
<dbReference type="PhosphoSitePlus" id="Q9BQS7"/>
<dbReference type="BioMuta" id="HEPH"/>
<dbReference type="DMDM" id="52782976"/>
<dbReference type="jPOST" id="Q9BQS7"/>
<dbReference type="MassIVE" id="Q9BQS7"/>
<dbReference type="PaxDb" id="9606-ENSP00000430620"/>
<dbReference type="PeptideAtlas" id="Q9BQS7"/>
<dbReference type="ProteomicsDB" id="20574"/>
<dbReference type="ProteomicsDB" id="78716">
    <molecule id="Q9BQS7-1"/>
</dbReference>
<dbReference type="ProteomicsDB" id="78717">
    <molecule id="Q9BQS7-2"/>
</dbReference>
<dbReference type="Pumba" id="Q9BQS7"/>
<dbReference type="Antibodypedia" id="13137">
    <property type="antibodies" value="154 antibodies from 23 providers"/>
</dbReference>
<dbReference type="DNASU" id="9843"/>
<dbReference type="Ensembl" id="ENST00000336279.9">
    <molecule id="Q9BQS7-4"/>
    <property type="protein sequence ID" value="ENSP00000337418.5"/>
    <property type="gene ID" value="ENSG00000089472.18"/>
</dbReference>
<dbReference type="Ensembl" id="ENST00000343002.7">
    <molecule id="Q9BQS7-1"/>
    <property type="protein sequence ID" value="ENSP00000343939.2"/>
    <property type="gene ID" value="ENSG00000089472.18"/>
</dbReference>
<dbReference type="Ensembl" id="ENST00000441993.7">
    <molecule id="Q9BQS7-2"/>
    <property type="protein sequence ID" value="ENSP00000411687.3"/>
    <property type="gene ID" value="ENSG00000089472.18"/>
</dbReference>
<dbReference type="Ensembl" id="ENST00000519389.6">
    <molecule id="Q9BQS7-1"/>
    <property type="protein sequence ID" value="ENSP00000430620.2"/>
    <property type="gene ID" value="ENSG00000089472.18"/>
</dbReference>
<dbReference type="GeneID" id="9843"/>
<dbReference type="KEGG" id="hsa:9843"/>
<dbReference type="MANE-Select" id="ENST00000343002.7">
    <property type="protein sequence ID" value="ENSP00000343939.2"/>
    <property type="RefSeq nucleotide sequence ID" value="NM_001367233.3"/>
    <property type="RefSeq protein sequence ID" value="NP_001354162.2"/>
</dbReference>
<dbReference type="UCSC" id="uc004dwn.5">
    <molecule id="Q9BQS7-1"/>
    <property type="organism name" value="human"/>
</dbReference>
<dbReference type="AGR" id="HGNC:4866"/>
<dbReference type="CTD" id="9843"/>
<dbReference type="DisGeNET" id="9843"/>
<dbReference type="GeneCards" id="HEPH"/>
<dbReference type="HGNC" id="HGNC:4866">
    <property type="gene designation" value="HEPH"/>
</dbReference>
<dbReference type="HPA" id="ENSG00000089472">
    <property type="expression patterns" value="Tissue enhanced (intestine, smooth muscle)"/>
</dbReference>
<dbReference type="MIM" id="300167">
    <property type="type" value="gene"/>
</dbReference>
<dbReference type="neXtProt" id="NX_Q9BQS7"/>
<dbReference type="OpenTargets" id="ENSG00000089472"/>
<dbReference type="PharmGKB" id="PA29241"/>
<dbReference type="VEuPathDB" id="HostDB:ENSG00000089472"/>
<dbReference type="eggNOG" id="KOG1263">
    <property type="taxonomic scope" value="Eukaryota"/>
</dbReference>
<dbReference type="GeneTree" id="ENSGT00940000158517"/>
<dbReference type="HOGENOM" id="CLU_005569_0_0_1"/>
<dbReference type="InParanoid" id="Q9BQS7"/>
<dbReference type="OrthoDB" id="2121828at2759"/>
<dbReference type="PAN-GO" id="Q9BQS7">
    <property type="GO annotations" value="4 GO annotations based on evolutionary models"/>
</dbReference>
<dbReference type="PhylomeDB" id="Q9BQS7"/>
<dbReference type="TreeFam" id="TF329807"/>
<dbReference type="PathwayCommons" id="Q9BQS7"/>
<dbReference type="Reactome" id="R-HSA-425410">
    <property type="pathway name" value="Metal ion SLC transporters"/>
</dbReference>
<dbReference type="Reactome" id="R-HSA-5655799">
    <property type="pathway name" value="Defective SLC40A1 causes hemochromatosis 4 (HFE4) (duodenum)"/>
</dbReference>
<dbReference type="Reactome" id="R-HSA-917937">
    <property type="pathway name" value="Iron uptake and transport"/>
</dbReference>
<dbReference type="SignaLink" id="Q9BQS7"/>
<dbReference type="BioGRID-ORCS" id="9843">
    <property type="hits" value="11 hits in 781 CRISPR screens"/>
</dbReference>
<dbReference type="CD-CODE" id="91857CE7">
    <property type="entry name" value="Nucleolus"/>
</dbReference>
<dbReference type="ChiTaRS" id="HEPH">
    <property type="organism name" value="human"/>
</dbReference>
<dbReference type="GenomeRNAi" id="9843"/>
<dbReference type="Pharos" id="Q9BQS7">
    <property type="development level" value="Tbio"/>
</dbReference>
<dbReference type="PRO" id="PR:Q9BQS7"/>
<dbReference type="Proteomes" id="UP000005640">
    <property type="component" value="Chromosome X"/>
</dbReference>
<dbReference type="RNAct" id="Q9BQS7">
    <property type="molecule type" value="protein"/>
</dbReference>
<dbReference type="Bgee" id="ENSG00000089472">
    <property type="expression patterns" value="Expressed in jejunal mucosa and 176 other cell types or tissues"/>
</dbReference>
<dbReference type="ExpressionAtlas" id="Q9BQS7">
    <property type="expression patterns" value="baseline and differential"/>
</dbReference>
<dbReference type="GO" id="GO:0016323">
    <property type="term" value="C:basolateral plasma membrane"/>
    <property type="evidence" value="ECO:0000314"/>
    <property type="project" value="UniProtKB"/>
</dbReference>
<dbReference type="GO" id="GO:0048471">
    <property type="term" value="C:perinuclear region of cytoplasm"/>
    <property type="evidence" value="ECO:0007669"/>
    <property type="project" value="Ensembl"/>
</dbReference>
<dbReference type="GO" id="GO:0005886">
    <property type="term" value="C:plasma membrane"/>
    <property type="evidence" value="ECO:0000318"/>
    <property type="project" value="GO_Central"/>
</dbReference>
<dbReference type="GO" id="GO:0005507">
    <property type="term" value="F:copper ion binding"/>
    <property type="evidence" value="ECO:0007669"/>
    <property type="project" value="InterPro"/>
</dbReference>
<dbReference type="GO" id="GO:0004322">
    <property type="term" value="F:ferroxidase activity"/>
    <property type="evidence" value="ECO:0000314"/>
    <property type="project" value="UniProtKB"/>
</dbReference>
<dbReference type="GO" id="GO:0160179">
    <property type="term" value="P:intestinal iron absorption"/>
    <property type="evidence" value="ECO:0000250"/>
    <property type="project" value="UniProtKB"/>
</dbReference>
<dbReference type="GO" id="GO:0006826">
    <property type="term" value="P:iron ion transport"/>
    <property type="evidence" value="ECO:0007669"/>
    <property type="project" value="UniProtKB-KW"/>
</dbReference>
<dbReference type="GO" id="GO:0060586">
    <property type="term" value="P:multicellular organismal-level iron ion homeostasis"/>
    <property type="evidence" value="ECO:0000250"/>
    <property type="project" value="UniProtKB"/>
</dbReference>
<dbReference type="GO" id="GO:1904040">
    <property type="term" value="P:positive regulation of iron export across plasma membrane"/>
    <property type="evidence" value="ECO:0000250"/>
    <property type="project" value="UniProtKB"/>
</dbReference>
<dbReference type="CDD" id="cd04222">
    <property type="entry name" value="CuRO_1_ceruloplasmin"/>
    <property type="match status" value="1"/>
</dbReference>
<dbReference type="CDD" id="cd11021">
    <property type="entry name" value="CuRO_2_ceruloplasmin"/>
    <property type="match status" value="1"/>
</dbReference>
<dbReference type="CDD" id="cd04224">
    <property type="entry name" value="CuRO_3_ceruloplasmin"/>
    <property type="match status" value="1"/>
</dbReference>
<dbReference type="CDD" id="cd11022">
    <property type="entry name" value="CuRO_4_ceruloplasmin"/>
    <property type="match status" value="1"/>
</dbReference>
<dbReference type="CDD" id="cd04225">
    <property type="entry name" value="CuRO_5_ceruloplasmin"/>
    <property type="match status" value="1"/>
</dbReference>
<dbReference type="FunFam" id="2.60.40.420:FF:000009">
    <property type="entry name" value="Ceruloplasmin"/>
    <property type="match status" value="1"/>
</dbReference>
<dbReference type="FunFam" id="2.60.40.420:FF:000015">
    <property type="entry name" value="Ceruloplasmin"/>
    <property type="match status" value="1"/>
</dbReference>
<dbReference type="FunFam" id="2.60.40.420:FF:000075">
    <property type="entry name" value="hephaestin isoform X2"/>
    <property type="match status" value="1"/>
</dbReference>
<dbReference type="FunFam" id="2.60.40.420:FF:000002">
    <property type="entry name" value="Hephaestin like 1"/>
    <property type="match status" value="1"/>
</dbReference>
<dbReference type="Gene3D" id="2.60.40.420">
    <property type="entry name" value="Cupredoxins - blue copper proteins"/>
    <property type="match status" value="3"/>
</dbReference>
<dbReference type="InterPro" id="IPR048236">
    <property type="entry name" value="Ceruloplasmin-like_CuRO_5"/>
</dbReference>
<dbReference type="InterPro" id="IPR011707">
    <property type="entry name" value="Cu-oxidase-like_N"/>
</dbReference>
<dbReference type="InterPro" id="IPR011706">
    <property type="entry name" value="Cu-oxidase_C"/>
</dbReference>
<dbReference type="InterPro" id="IPR045087">
    <property type="entry name" value="Cu-oxidase_fam"/>
</dbReference>
<dbReference type="InterPro" id="IPR033138">
    <property type="entry name" value="Cu_oxidase_CS"/>
</dbReference>
<dbReference type="InterPro" id="IPR002355">
    <property type="entry name" value="Cu_oxidase_Cu_BS"/>
</dbReference>
<dbReference type="InterPro" id="IPR008972">
    <property type="entry name" value="Cupredoxin"/>
</dbReference>
<dbReference type="PANTHER" id="PTHR11709:SF221">
    <property type="entry name" value="HEPHAESTIN"/>
    <property type="match status" value="1"/>
</dbReference>
<dbReference type="PANTHER" id="PTHR11709">
    <property type="entry name" value="MULTI-COPPER OXIDASE"/>
    <property type="match status" value="1"/>
</dbReference>
<dbReference type="Pfam" id="PF07731">
    <property type="entry name" value="Cu-oxidase_2"/>
    <property type="match status" value="1"/>
</dbReference>
<dbReference type="Pfam" id="PF07732">
    <property type="entry name" value="Cu-oxidase_3"/>
    <property type="match status" value="2"/>
</dbReference>
<dbReference type="SUPFAM" id="SSF49503">
    <property type="entry name" value="Cupredoxins"/>
    <property type="match status" value="6"/>
</dbReference>
<dbReference type="PROSITE" id="PS00079">
    <property type="entry name" value="MULTICOPPER_OXIDASE1"/>
    <property type="match status" value="3"/>
</dbReference>
<dbReference type="PROSITE" id="PS00080">
    <property type="entry name" value="MULTICOPPER_OXIDASE2"/>
    <property type="match status" value="1"/>
</dbReference>
<gene>
    <name evidence="16" type="primary">HEPH</name>
    <name evidence="15" type="synonym">KIAA0698</name>
    <name evidence="14" type="ORF">UNQ2562/PRO6242</name>
</gene>
<evidence type="ECO:0000250" key="1">
    <source>
        <dbReference type="UniProtKB" id="P00450"/>
    </source>
</evidence>
<evidence type="ECO:0000250" key="2">
    <source>
        <dbReference type="UniProtKB" id="Q9Z0Z4"/>
    </source>
</evidence>
<evidence type="ECO:0000255" key="3"/>
<evidence type="ECO:0000269" key="4">
    <source>
    </source>
</evidence>
<evidence type="ECO:0000269" key="5">
    <source>
    </source>
</evidence>
<evidence type="ECO:0000269" key="6">
    <source>
    </source>
</evidence>
<evidence type="ECO:0000269" key="7">
    <source>
    </source>
</evidence>
<evidence type="ECO:0000269" key="8">
    <source>
    </source>
</evidence>
<evidence type="ECO:0000303" key="9">
    <source>
    </source>
</evidence>
<evidence type="ECO:0000303" key="10">
    <source>
    </source>
</evidence>
<evidence type="ECO:0000303" key="11">
    <source>
    </source>
</evidence>
<evidence type="ECO:0000305" key="12"/>
<evidence type="ECO:0000305" key="13">
    <source>
    </source>
</evidence>
<evidence type="ECO:0000312" key="14">
    <source>
        <dbReference type="EMBL" id="AAQ89349.1"/>
    </source>
</evidence>
<evidence type="ECO:0000312" key="15">
    <source>
        <dbReference type="EMBL" id="BAA31673.2"/>
    </source>
</evidence>
<evidence type="ECO:0000312" key="16">
    <source>
        <dbReference type="HGNC" id="HGNC:4866"/>
    </source>
</evidence>
<evidence type="ECO:0007744" key="17">
    <source>
    </source>
</evidence>
<proteinExistence type="evidence at protein level"/>
<protein>
    <recommendedName>
        <fullName evidence="9">Hephaestin</fullName>
        <shortName evidence="11">Hp</shortName>
        <ecNumber evidence="7">1.16.3.1</ecNumber>
    </recommendedName>
</protein>
<reference key="1">
    <citation type="journal article" date="2002" name="Protein Eng.">
        <title>Analysis of the human hephaestin gene and protein: comparative modelling of the N-terminus ecto-domain based upon ceruloplasmin.</title>
        <authorList>
            <person name="Syed B.A."/>
            <person name="Beaumont N.J."/>
            <person name="Patel A."/>
            <person name="Naylor C.E."/>
            <person name="Bayele H.K."/>
            <person name="Joannou C.L."/>
            <person name="Rowe P.S.N."/>
            <person name="Evans R.W."/>
            <person name="Srai S.K.S."/>
        </authorList>
    </citation>
    <scope>NUCLEOTIDE SEQUENCE [MRNA] (ISOFORM 1)</scope>
    <scope>TISSUE SPECIFICITY</scope>
</reference>
<reference key="2">
    <citation type="submission" date="1999-05" db="EMBL/GenBank/DDBJ databases">
        <authorList>
            <person name="Zhao K.W."/>
        </authorList>
    </citation>
    <scope>NUCLEOTIDE SEQUENCE [MRNA] (ISOFORM 1)</scope>
</reference>
<reference key="3">
    <citation type="journal article" date="2003" name="Genome Res.">
        <title>The secreted protein discovery initiative (SPDI), a large-scale effort to identify novel human secreted and transmembrane proteins: a bioinformatics assessment.</title>
        <authorList>
            <person name="Clark H.F."/>
            <person name="Gurney A.L."/>
            <person name="Abaya E."/>
            <person name="Baker K."/>
            <person name="Baldwin D.T."/>
            <person name="Brush J."/>
            <person name="Chen J."/>
            <person name="Chow B."/>
            <person name="Chui C."/>
            <person name="Crowley C."/>
            <person name="Currell B."/>
            <person name="Deuel B."/>
            <person name="Dowd P."/>
            <person name="Eaton D."/>
            <person name="Foster J.S."/>
            <person name="Grimaldi C."/>
            <person name="Gu Q."/>
            <person name="Hass P.E."/>
            <person name="Heldens S."/>
            <person name="Huang A."/>
            <person name="Kim H.S."/>
            <person name="Klimowski L."/>
            <person name="Jin Y."/>
            <person name="Johnson S."/>
            <person name="Lee J."/>
            <person name="Lewis L."/>
            <person name="Liao D."/>
            <person name="Mark M.R."/>
            <person name="Robbie E."/>
            <person name="Sanchez C."/>
            <person name="Schoenfeld J."/>
            <person name="Seshagiri S."/>
            <person name="Simmons L."/>
            <person name="Singh J."/>
            <person name="Smith V."/>
            <person name="Stinson J."/>
            <person name="Vagts A."/>
            <person name="Vandlen R.L."/>
            <person name="Watanabe C."/>
            <person name="Wieand D."/>
            <person name="Woods K."/>
            <person name="Xie M.-H."/>
            <person name="Yansura D.G."/>
            <person name="Yi S."/>
            <person name="Yu G."/>
            <person name="Yuan J."/>
            <person name="Zhang M."/>
            <person name="Zhang Z."/>
            <person name="Goddard A.D."/>
            <person name="Wood W.I."/>
            <person name="Godowski P.J."/>
            <person name="Gray A.M."/>
        </authorList>
    </citation>
    <scope>NUCLEOTIDE SEQUENCE [LARGE SCALE MRNA] (ISOFORM 2)</scope>
</reference>
<reference key="4">
    <citation type="journal article" date="2005" name="Nature">
        <title>The DNA sequence of the human X chromosome.</title>
        <authorList>
            <person name="Ross M.T."/>
            <person name="Grafham D.V."/>
            <person name="Coffey A.J."/>
            <person name="Scherer S."/>
            <person name="McLay K."/>
            <person name="Muzny D."/>
            <person name="Platzer M."/>
            <person name="Howell G.R."/>
            <person name="Burrows C."/>
            <person name="Bird C.P."/>
            <person name="Frankish A."/>
            <person name="Lovell F.L."/>
            <person name="Howe K.L."/>
            <person name="Ashurst J.L."/>
            <person name="Fulton R.S."/>
            <person name="Sudbrak R."/>
            <person name="Wen G."/>
            <person name="Jones M.C."/>
            <person name="Hurles M.E."/>
            <person name="Andrews T.D."/>
            <person name="Scott C.E."/>
            <person name="Searle S."/>
            <person name="Ramser J."/>
            <person name="Whittaker A."/>
            <person name="Deadman R."/>
            <person name="Carter N.P."/>
            <person name="Hunt S.E."/>
            <person name="Chen R."/>
            <person name="Cree A."/>
            <person name="Gunaratne P."/>
            <person name="Havlak P."/>
            <person name="Hodgson A."/>
            <person name="Metzker M.L."/>
            <person name="Richards S."/>
            <person name="Scott G."/>
            <person name="Steffen D."/>
            <person name="Sodergren E."/>
            <person name="Wheeler D.A."/>
            <person name="Worley K.C."/>
            <person name="Ainscough R."/>
            <person name="Ambrose K.D."/>
            <person name="Ansari-Lari M.A."/>
            <person name="Aradhya S."/>
            <person name="Ashwell R.I."/>
            <person name="Babbage A.K."/>
            <person name="Bagguley C.L."/>
            <person name="Ballabio A."/>
            <person name="Banerjee R."/>
            <person name="Barker G.E."/>
            <person name="Barlow K.F."/>
            <person name="Barrett I.P."/>
            <person name="Bates K.N."/>
            <person name="Beare D.M."/>
            <person name="Beasley H."/>
            <person name="Beasley O."/>
            <person name="Beck A."/>
            <person name="Bethel G."/>
            <person name="Blechschmidt K."/>
            <person name="Brady N."/>
            <person name="Bray-Allen S."/>
            <person name="Bridgeman A.M."/>
            <person name="Brown A.J."/>
            <person name="Brown M.J."/>
            <person name="Bonnin D."/>
            <person name="Bruford E.A."/>
            <person name="Buhay C."/>
            <person name="Burch P."/>
            <person name="Burford D."/>
            <person name="Burgess J."/>
            <person name="Burrill W."/>
            <person name="Burton J."/>
            <person name="Bye J.M."/>
            <person name="Carder C."/>
            <person name="Carrel L."/>
            <person name="Chako J."/>
            <person name="Chapman J.C."/>
            <person name="Chavez D."/>
            <person name="Chen E."/>
            <person name="Chen G."/>
            <person name="Chen Y."/>
            <person name="Chen Z."/>
            <person name="Chinault C."/>
            <person name="Ciccodicola A."/>
            <person name="Clark S.Y."/>
            <person name="Clarke G."/>
            <person name="Clee C.M."/>
            <person name="Clegg S."/>
            <person name="Clerc-Blankenburg K."/>
            <person name="Clifford K."/>
            <person name="Cobley V."/>
            <person name="Cole C.G."/>
            <person name="Conquer J.S."/>
            <person name="Corby N."/>
            <person name="Connor R.E."/>
            <person name="David R."/>
            <person name="Davies J."/>
            <person name="Davis C."/>
            <person name="Davis J."/>
            <person name="Delgado O."/>
            <person name="Deshazo D."/>
            <person name="Dhami P."/>
            <person name="Ding Y."/>
            <person name="Dinh H."/>
            <person name="Dodsworth S."/>
            <person name="Draper H."/>
            <person name="Dugan-Rocha S."/>
            <person name="Dunham A."/>
            <person name="Dunn M."/>
            <person name="Durbin K.J."/>
            <person name="Dutta I."/>
            <person name="Eades T."/>
            <person name="Ellwood M."/>
            <person name="Emery-Cohen A."/>
            <person name="Errington H."/>
            <person name="Evans K.L."/>
            <person name="Faulkner L."/>
            <person name="Francis F."/>
            <person name="Frankland J."/>
            <person name="Fraser A.E."/>
            <person name="Galgoczy P."/>
            <person name="Gilbert J."/>
            <person name="Gill R."/>
            <person name="Gloeckner G."/>
            <person name="Gregory S.G."/>
            <person name="Gribble S."/>
            <person name="Griffiths C."/>
            <person name="Grocock R."/>
            <person name="Gu Y."/>
            <person name="Gwilliam R."/>
            <person name="Hamilton C."/>
            <person name="Hart E.A."/>
            <person name="Hawes A."/>
            <person name="Heath P.D."/>
            <person name="Heitmann K."/>
            <person name="Hennig S."/>
            <person name="Hernandez J."/>
            <person name="Hinzmann B."/>
            <person name="Ho S."/>
            <person name="Hoffs M."/>
            <person name="Howden P.J."/>
            <person name="Huckle E.J."/>
            <person name="Hume J."/>
            <person name="Hunt P.J."/>
            <person name="Hunt A.R."/>
            <person name="Isherwood J."/>
            <person name="Jacob L."/>
            <person name="Johnson D."/>
            <person name="Jones S."/>
            <person name="de Jong P.J."/>
            <person name="Joseph S.S."/>
            <person name="Keenan S."/>
            <person name="Kelly S."/>
            <person name="Kershaw J.K."/>
            <person name="Khan Z."/>
            <person name="Kioschis P."/>
            <person name="Klages S."/>
            <person name="Knights A.J."/>
            <person name="Kosiura A."/>
            <person name="Kovar-Smith C."/>
            <person name="Laird G.K."/>
            <person name="Langford C."/>
            <person name="Lawlor S."/>
            <person name="Leversha M."/>
            <person name="Lewis L."/>
            <person name="Liu W."/>
            <person name="Lloyd C."/>
            <person name="Lloyd D.M."/>
            <person name="Loulseged H."/>
            <person name="Loveland J.E."/>
            <person name="Lovell J.D."/>
            <person name="Lozado R."/>
            <person name="Lu J."/>
            <person name="Lyne R."/>
            <person name="Ma J."/>
            <person name="Maheshwari M."/>
            <person name="Matthews L.H."/>
            <person name="McDowall J."/>
            <person name="McLaren S."/>
            <person name="McMurray A."/>
            <person name="Meidl P."/>
            <person name="Meitinger T."/>
            <person name="Milne S."/>
            <person name="Miner G."/>
            <person name="Mistry S.L."/>
            <person name="Morgan M."/>
            <person name="Morris S."/>
            <person name="Mueller I."/>
            <person name="Mullikin J.C."/>
            <person name="Nguyen N."/>
            <person name="Nordsiek G."/>
            <person name="Nyakatura G."/>
            <person name="O'dell C.N."/>
            <person name="Okwuonu G."/>
            <person name="Palmer S."/>
            <person name="Pandian R."/>
            <person name="Parker D."/>
            <person name="Parrish J."/>
            <person name="Pasternak S."/>
            <person name="Patel D."/>
            <person name="Pearce A.V."/>
            <person name="Pearson D.M."/>
            <person name="Pelan S.E."/>
            <person name="Perez L."/>
            <person name="Porter K.M."/>
            <person name="Ramsey Y."/>
            <person name="Reichwald K."/>
            <person name="Rhodes S."/>
            <person name="Ridler K.A."/>
            <person name="Schlessinger D."/>
            <person name="Schueler M.G."/>
            <person name="Sehra H.K."/>
            <person name="Shaw-Smith C."/>
            <person name="Shen H."/>
            <person name="Sheridan E.M."/>
            <person name="Shownkeen R."/>
            <person name="Skuce C.D."/>
            <person name="Smith M.L."/>
            <person name="Sotheran E.C."/>
            <person name="Steingruber H.E."/>
            <person name="Steward C.A."/>
            <person name="Storey R."/>
            <person name="Swann R.M."/>
            <person name="Swarbreck D."/>
            <person name="Tabor P.E."/>
            <person name="Taudien S."/>
            <person name="Taylor T."/>
            <person name="Teague B."/>
            <person name="Thomas K."/>
            <person name="Thorpe A."/>
            <person name="Timms K."/>
            <person name="Tracey A."/>
            <person name="Trevanion S."/>
            <person name="Tromans A.C."/>
            <person name="d'Urso M."/>
            <person name="Verduzco D."/>
            <person name="Villasana D."/>
            <person name="Waldron L."/>
            <person name="Wall M."/>
            <person name="Wang Q."/>
            <person name="Warren J."/>
            <person name="Warry G.L."/>
            <person name="Wei X."/>
            <person name="West A."/>
            <person name="Whitehead S.L."/>
            <person name="Whiteley M.N."/>
            <person name="Wilkinson J.E."/>
            <person name="Willey D.L."/>
            <person name="Williams G."/>
            <person name="Williams L."/>
            <person name="Williamson A."/>
            <person name="Williamson H."/>
            <person name="Wilming L."/>
            <person name="Woodmansey R.L."/>
            <person name="Wray P.W."/>
            <person name="Yen J."/>
            <person name="Zhang J."/>
            <person name="Zhou J."/>
            <person name="Zoghbi H."/>
            <person name="Zorilla S."/>
            <person name="Buck D."/>
            <person name="Reinhardt R."/>
            <person name="Poustka A."/>
            <person name="Rosenthal A."/>
            <person name="Lehrach H."/>
            <person name="Meindl A."/>
            <person name="Minx P.J."/>
            <person name="Hillier L.W."/>
            <person name="Willard H.F."/>
            <person name="Wilson R.K."/>
            <person name="Waterston R.H."/>
            <person name="Rice C.M."/>
            <person name="Vaudin M."/>
            <person name="Coulson A."/>
            <person name="Nelson D.L."/>
            <person name="Weinstock G."/>
            <person name="Sulston J.E."/>
            <person name="Durbin R.M."/>
            <person name="Hubbard T."/>
            <person name="Gibbs R.A."/>
            <person name="Beck S."/>
            <person name="Rogers J."/>
            <person name="Bentley D.R."/>
        </authorList>
    </citation>
    <scope>NUCLEOTIDE SEQUENCE [LARGE SCALE GENOMIC DNA]</scope>
</reference>
<reference key="5">
    <citation type="submission" date="2005-09" db="EMBL/GenBank/DDBJ databases">
        <authorList>
            <person name="Mural R.J."/>
            <person name="Istrail S."/>
            <person name="Sutton G.G."/>
            <person name="Florea L."/>
            <person name="Halpern A.L."/>
            <person name="Mobarry C.M."/>
            <person name="Lippert R."/>
            <person name="Walenz B."/>
            <person name="Shatkay H."/>
            <person name="Dew I."/>
            <person name="Miller J.R."/>
            <person name="Flanigan M.J."/>
            <person name="Edwards N.J."/>
            <person name="Bolanos R."/>
            <person name="Fasulo D."/>
            <person name="Halldorsson B.V."/>
            <person name="Hannenhalli S."/>
            <person name="Turner R."/>
            <person name="Yooseph S."/>
            <person name="Lu F."/>
            <person name="Nusskern D.R."/>
            <person name="Shue B.C."/>
            <person name="Zheng X.H."/>
            <person name="Zhong F."/>
            <person name="Delcher A.L."/>
            <person name="Huson D.H."/>
            <person name="Kravitz S.A."/>
            <person name="Mouchard L."/>
            <person name="Reinert K."/>
            <person name="Remington K.A."/>
            <person name="Clark A.G."/>
            <person name="Waterman M.S."/>
            <person name="Eichler E.E."/>
            <person name="Adams M.D."/>
            <person name="Hunkapiller M.W."/>
            <person name="Myers E.W."/>
            <person name="Venter J.C."/>
        </authorList>
    </citation>
    <scope>NUCLEOTIDE SEQUENCE [LARGE SCALE GENOMIC DNA]</scope>
</reference>
<reference key="6">
    <citation type="journal article" date="2004" name="Genome Res.">
        <title>The status, quality, and expansion of the NIH full-length cDNA project: the Mammalian Gene Collection (MGC).</title>
        <authorList>
            <consortium name="The MGC Project Team"/>
        </authorList>
    </citation>
    <scope>NUCLEOTIDE SEQUENCE [LARGE SCALE MRNA] (ISOFORM 1)</scope>
    <source>
        <tissue>Colon</tissue>
    </source>
</reference>
<reference key="7">
    <citation type="journal article" date="1998" name="DNA Res.">
        <title>Prediction of the coding sequences of unidentified human genes. X. The complete sequences of 100 new cDNA clones from brain which can code for large proteins in vitro.</title>
        <authorList>
            <person name="Ishikawa K."/>
            <person name="Nagase T."/>
            <person name="Suyama M."/>
            <person name="Miyajima N."/>
            <person name="Tanaka A."/>
            <person name="Kotani H."/>
            <person name="Nomura N."/>
            <person name="Ohara O."/>
        </authorList>
    </citation>
    <scope>NUCLEOTIDE SEQUENCE [LARGE SCALE MRNA] OF 55-1158 (ISOFORM 1)</scope>
    <source>
        <tissue>Brain</tissue>
    </source>
</reference>
<reference key="8">
    <citation type="journal article" date="2002" name="DNA Res.">
        <title>Construction of expression-ready cDNA clones for KIAA genes: manual curation of 330 KIAA cDNA clones.</title>
        <authorList>
            <person name="Nakajima D."/>
            <person name="Okazaki N."/>
            <person name="Yamakawa H."/>
            <person name="Kikuno R."/>
            <person name="Ohara O."/>
            <person name="Nagase T."/>
        </authorList>
    </citation>
    <scope>SEQUENCE REVISION</scope>
</reference>
<reference key="9">
    <citation type="journal article" date="2007" name="J. Cell. Biochem.">
        <title>Colocalization of ferroportin-1 with hephaestin on the basolateral membrane of human intestinal absorptive cells.</title>
        <authorList>
            <person name="Han O."/>
            <person name="Kim E.Y."/>
        </authorList>
    </citation>
    <scope>SUBCELLULAR LOCATION</scope>
    <scope>TISSUE SPECIFICITY</scope>
</reference>
<reference key="10">
    <citation type="journal article" date="2010" name="Am. J. Physiol.">
        <title>Human hephaestin expression is not limited to enterocytes of the gastrointestinal tract but is also found in the antrum, the enteric nervous system, and pancreatic {beta}-cells.</title>
        <authorList>
            <person name="Hudson D.M."/>
            <person name="Curtis S.B."/>
            <person name="Smith V.C."/>
            <person name="Griffiths T.A."/>
            <person name="Wong A.Y."/>
            <person name="Scudamore C.H."/>
            <person name="Buchan A.M."/>
            <person name="MacGillivray R.T."/>
        </authorList>
    </citation>
    <scope>SUBCELLULAR LOCATION</scope>
</reference>
<reference key="11">
    <citation type="journal article" date="2013" name="J. Proteome Res.">
        <title>Toward a comprehensive characterization of a human cancer cell phosphoproteome.</title>
        <authorList>
            <person name="Zhou H."/>
            <person name="Di Palma S."/>
            <person name="Preisinger C."/>
            <person name="Peng M."/>
            <person name="Polat A.N."/>
            <person name="Heck A.J."/>
            <person name="Mohammed S."/>
        </authorList>
    </citation>
    <scope>PHOSPHORYLATION [LARGE SCALE ANALYSIS] AT SER-1145 AND SER-1150</scope>
    <scope>IDENTIFICATION BY MASS SPECTROMETRY [LARGE SCALE ANALYSIS]</scope>
    <source>
        <tissue>Erythroleukemia</tissue>
    </source>
</reference>
<reference key="12">
    <citation type="journal article" date="2012" name="J. Biol. Inorg. Chem.">
        <title>Functional role of the putative iron ligands in the ferroxidase activity of recombinant human hephaestin.</title>
        <authorList>
            <person name="Vashchenko G."/>
            <person name="Macgillivray R.T."/>
        </authorList>
    </citation>
    <scope>FUNCTION</scope>
    <scope>CATALYTIC ACTIVITY</scope>
    <scope>BIOPHYSICOCHEMICAL PROPERTIES</scope>
    <scope>MUTAGENESIS OF GLU-264; HIS-269; ASP-616; HIS-621; GLU-960 AND HIS-965</scope>
</reference>
<reference key="13">
    <citation type="journal article" date="2023" name="J. Biomed. Sci.">
        <title>Apo- and holo-transferrin differentially interact with hephaestin and ferroportin in a novel mechanism of cellular iron release regulation.</title>
        <authorList>
            <person name="Baringer S.L."/>
            <person name="Palsa K."/>
            <person name="Spiegelman V.S."/>
            <person name="Simpson I.A."/>
            <person name="Connor J.R."/>
        </authorList>
    </citation>
    <scope>FUNCTION</scope>
    <scope>SUBUNIT</scope>
</reference>
<accession>Q9BQS7</accession>
<accession>B1AJX8</accession>
<accession>D3DVT7</accession>
<accession>E9PHN8</accession>
<accession>O75180</accession>
<accession>Q6UW45</accession>
<accession>Q9C058</accession>